<proteinExistence type="inferred from homology"/>
<sequence>MSYSYAEKKRIRKEFGVLPHILDVPYLLSIQTESYKKFLTADAAKGRLHSGLEIVLKQSFPVESKNGQYELHYVDYQIGEPTFDETECQVRGATYDAPLNVKLRLVVYNKDALPNEKIVEDIREEYVYMGDIPLMTTNGTFIINGTERVVVSQLHRSPGVFFSKDDSEEGAFSARIIPYRGSWLDFEFDSKGIIWARIDRKRKFCATVILKALGYTQEQILENFSESKTITFNSKGFALRLDNLSNMKGELLKFDIVDAQDNVIVKKNKKLTSRDVKKIKDAGVDSVAIDFDLVSTLRVAKDIVNEATGEVIAYANDDVTESLLESCVEVGMLELEVIDFITTERGRYISDTLKYDLTRNTDEALVEIYKVLRPGDPPAAASVKALFEGLFFIESRYSLSDIGRMKLNARLGSDKVSKDIYTLENSDIVGVIEELINIRDGKGKVDDIDHLGNRRVRSVGEMVENQFRIGLYRVEKGIRESMSLVHKDKLMPKDIVNSKPITAAIKEFFTSGALSQFMDQDNPLSEVTHKRRISALGPGGLSRDRAGFEVRDVHATHYGRLCPIETPEGPNIGLINSLASYARVNDYGFLEAPYRKVVDGKVTDEIEYLSAIDEDNYVIAQASTKLDENNHFVEDLIQCRSGGEAIFTESSRVQYMDVSAKQMVSAAAALIPFLEHDDANRVLMGANMQRQAVPTLKSEKPLVGTGMEKIVARDSGNCIIARNAGEVAEVDSNRIVIKVDTEKSQTSNLVDIYSLTKFKRSNKNTCINQRPIVNVGDKVEAGDILADGFATDFGELSLGHNLMVAFMPWNGYNFEDSILLSERIVKDDKYTSIHIEEFTCVARDTKLGPEEITADIPNVSESSLAKLDESGIVHIGANVEAGDILVAKITPKAEQQLTPEERLLRAIFNEKASNVADSSLRMPSGTSGTVINVQVFENDKGGKSKRALKIEKELIDKARKDFDEEFAVIESVVKSSIEQEVVGAKIQKAKGLKKGAILTKEFLATLPFSKWLEISFEDEKLEEKVQNAREYYEEAKIAIDAKFEAKKKSITQSNELSPGVLKTVKVFVAIKKRIQPGDKMAGRHGNKGVVSRVLPVEDMPYMEDGTPVDVCLNPLGIPSRMNIGQILEAHLGLASYGLGKKIEKTLEKTRKAAELRKTLEEVYNSVGDKKVNLEALNDEEILTLCDNLKGGVPIATPVFDGAKEEDIKSLLKIGGFATNGQMKLFDGRTGKPFDRHVTVGYMYMLKLDHLVDDKMHARSTGSYSLVTQQPLGGKAQFGGQRFGEMEVWALQAYGAAYTLREMLTVKSDDIAGRSKMYKNIVDGKLTMNVDVPESFNVLRNEVRALGIDMDFDYSSEEE</sequence>
<accession>A4IW99</accession>
<evidence type="ECO:0000255" key="1">
    <source>
        <dbReference type="HAMAP-Rule" id="MF_01321"/>
    </source>
</evidence>
<protein>
    <recommendedName>
        <fullName evidence="1">DNA-directed RNA polymerase subunit beta</fullName>
        <shortName evidence="1">RNAP subunit beta</shortName>
        <ecNumber evidence="1">2.7.7.6</ecNumber>
    </recommendedName>
    <alternativeName>
        <fullName evidence="1">RNA polymerase subunit beta</fullName>
    </alternativeName>
    <alternativeName>
        <fullName evidence="1">Transcriptase subunit beta</fullName>
    </alternativeName>
</protein>
<comment type="function">
    <text evidence="1">DNA-dependent RNA polymerase catalyzes the transcription of DNA into RNA using the four ribonucleoside triphosphates as substrates.</text>
</comment>
<comment type="catalytic activity">
    <reaction evidence="1">
        <text>RNA(n) + a ribonucleoside 5'-triphosphate = RNA(n+1) + diphosphate</text>
        <dbReference type="Rhea" id="RHEA:21248"/>
        <dbReference type="Rhea" id="RHEA-COMP:14527"/>
        <dbReference type="Rhea" id="RHEA-COMP:17342"/>
        <dbReference type="ChEBI" id="CHEBI:33019"/>
        <dbReference type="ChEBI" id="CHEBI:61557"/>
        <dbReference type="ChEBI" id="CHEBI:140395"/>
        <dbReference type="EC" id="2.7.7.6"/>
    </reaction>
</comment>
<comment type="subunit">
    <text evidence="1">The RNAP catalytic core consists of 2 alpha, 1 beta, 1 beta' and 1 omega subunit. When a sigma factor is associated with the core the holoenzyme is formed, which can initiate transcription.</text>
</comment>
<comment type="similarity">
    <text evidence="1">Belongs to the RNA polymerase beta chain family.</text>
</comment>
<dbReference type="EC" id="2.7.7.6" evidence="1"/>
<dbReference type="EMBL" id="CP000608">
    <property type="protein sequence ID" value="ABO46201.1"/>
    <property type="molecule type" value="Genomic_DNA"/>
</dbReference>
<dbReference type="RefSeq" id="WP_003019908.1">
    <property type="nucleotide sequence ID" value="NC_009257.1"/>
</dbReference>
<dbReference type="SMR" id="A4IW99"/>
<dbReference type="GeneID" id="75264700"/>
<dbReference type="KEGG" id="ftw:FTW_0234"/>
<dbReference type="HOGENOM" id="CLU_000524_4_3_6"/>
<dbReference type="GO" id="GO:0000428">
    <property type="term" value="C:DNA-directed RNA polymerase complex"/>
    <property type="evidence" value="ECO:0007669"/>
    <property type="project" value="UniProtKB-KW"/>
</dbReference>
<dbReference type="GO" id="GO:0003677">
    <property type="term" value="F:DNA binding"/>
    <property type="evidence" value="ECO:0007669"/>
    <property type="project" value="UniProtKB-UniRule"/>
</dbReference>
<dbReference type="GO" id="GO:0003899">
    <property type="term" value="F:DNA-directed RNA polymerase activity"/>
    <property type="evidence" value="ECO:0007669"/>
    <property type="project" value="UniProtKB-UniRule"/>
</dbReference>
<dbReference type="GO" id="GO:0032549">
    <property type="term" value="F:ribonucleoside binding"/>
    <property type="evidence" value="ECO:0007669"/>
    <property type="project" value="InterPro"/>
</dbReference>
<dbReference type="GO" id="GO:0006351">
    <property type="term" value="P:DNA-templated transcription"/>
    <property type="evidence" value="ECO:0007669"/>
    <property type="project" value="UniProtKB-UniRule"/>
</dbReference>
<dbReference type="CDD" id="cd00653">
    <property type="entry name" value="RNA_pol_B_RPB2"/>
    <property type="match status" value="1"/>
</dbReference>
<dbReference type="FunFam" id="3.90.1800.10:FF:000001">
    <property type="entry name" value="DNA-directed RNA polymerase subunit beta"/>
    <property type="match status" value="1"/>
</dbReference>
<dbReference type="Gene3D" id="2.40.50.100">
    <property type="match status" value="1"/>
</dbReference>
<dbReference type="Gene3D" id="2.40.50.150">
    <property type="match status" value="1"/>
</dbReference>
<dbReference type="Gene3D" id="3.90.1100.10">
    <property type="match status" value="2"/>
</dbReference>
<dbReference type="Gene3D" id="2.30.150.10">
    <property type="entry name" value="DNA-directed RNA polymerase, beta subunit, external 1 domain"/>
    <property type="match status" value="1"/>
</dbReference>
<dbReference type="Gene3D" id="2.40.270.10">
    <property type="entry name" value="DNA-directed RNA polymerase, subunit 2, domain 6"/>
    <property type="match status" value="2"/>
</dbReference>
<dbReference type="Gene3D" id="3.90.1800.10">
    <property type="entry name" value="RNA polymerase alpha subunit dimerisation domain"/>
    <property type="match status" value="1"/>
</dbReference>
<dbReference type="Gene3D" id="3.90.1110.10">
    <property type="entry name" value="RNA polymerase Rpb2, domain 2"/>
    <property type="match status" value="2"/>
</dbReference>
<dbReference type="HAMAP" id="MF_01321">
    <property type="entry name" value="RNApol_bact_RpoB"/>
    <property type="match status" value="1"/>
</dbReference>
<dbReference type="InterPro" id="IPR042107">
    <property type="entry name" value="DNA-dir_RNA_pol_bsu_ext_1_sf"/>
</dbReference>
<dbReference type="InterPro" id="IPR019462">
    <property type="entry name" value="DNA-dir_RNA_pol_bsu_external_1"/>
</dbReference>
<dbReference type="InterPro" id="IPR015712">
    <property type="entry name" value="DNA-dir_RNA_pol_su2"/>
</dbReference>
<dbReference type="InterPro" id="IPR007120">
    <property type="entry name" value="DNA-dir_RNAP_su2_dom"/>
</dbReference>
<dbReference type="InterPro" id="IPR037033">
    <property type="entry name" value="DNA-dir_RNAP_su2_hyb_sf"/>
</dbReference>
<dbReference type="InterPro" id="IPR010243">
    <property type="entry name" value="RNA_pol_bsu_bac"/>
</dbReference>
<dbReference type="InterPro" id="IPR007121">
    <property type="entry name" value="RNA_pol_bsu_CS"/>
</dbReference>
<dbReference type="InterPro" id="IPR007644">
    <property type="entry name" value="RNA_pol_bsu_protrusion"/>
</dbReference>
<dbReference type="InterPro" id="IPR007642">
    <property type="entry name" value="RNA_pol_Rpb2_2"/>
</dbReference>
<dbReference type="InterPro" id="IPR037034">
    <property type="entry name" value="RNA_pol_Rpb2_2_sf"/>
</dbReference>
<dbReference type="InterPro" id="IPR007645">
    <property type="entry name" value="RNA_pol_Rpb2_3"/>
</dbReference>
<dbReference type="InterPro" id="IPR007641">
    <property type="entry name" value="RNA_pol_Rpb2_7"/>
</dbReference>
<dbReference type="InterPro" id="IPR014724">
    <property type="entry name" value="RNA_pol_RPB2_OB-fold"/>
</dbReference>
<dbReference type="NCBIfam" id="NF001616">
    <property type="entry name" value="PRK00405.1"/>
    <property type="match status" value="1"/>
</dbReference>
<dbReference type="NCBIfam" id="TIGR02013">
    <property type="entry name" value="rpoB"/>
    <property type="match status" value="1"/>
</dbReference>
<dbReference type="PANTHER" id="PTHR20856">
    <property type="entry name" value="DNA-DIRECTED RNA POLYMERASE I SUBUNIT 2"/>
    <property type="match status" value="1"/>
</dbReference>
<dbReference type="Pfam" id="PF04563">
    <property type="entry name" value="RNA_pol_Rpb2_1"/>
    <property type="match status" value="1"/>
</dbReference>
<dbReference type="Pfam" id="PF04561">
    <property type="entry name" value="RNA_pol_Rpb2_2"/>
    <property type="match status" value="2"/>
</dbReference>
<dbReference type="Pfam" id="PF04565">
    <property type="entry name" value="RNA_pol_Rpb2_3"/>
    <property type="match status" value="1"/>
</dbReference>
<dbReference type="Pfam" id="PF10385">
    <property type="entry name" value="RNA_pol_Rpb2_45"/>
    <property type="match status" value="1"/>
</dbReference>
<dbReference type="Pfam" id="PF00562">
    <property type="entry name" value="RNA_pol_Rpb2_6"/>
    <property type="match status" value="1"/>
</dbReference>
<dbReference type="Pfam" id="PF04560">
    <property type="entry name" value="RNA_pol_Rpb2_7"/>
    <property type="match status" value="1"/>
</dbReference>
<dbReference type="SUPFAM" id="SSF64484">
    <property type="entry name" value="beta and beta-prime subunits of DNA dependent RNA-polymerase"/>
    <property type="match status" value="1"/>
</dbReference>
<dbReference type="PROSITE" id="PS01166">
    <property type="entry name" value="RNA_POL_BETA"/>
    <property type="match status" value="1"/>
</dbReference>
<gene>
    <name evidence="1" type="primary">rpoB</name>
    <name type="ordered locus">FTW_0234</name>
</gene>
<keyword id="KW-0240">DNA-directed RNA polymerase</keyword>
<keyword id="KW-0548">Nucleotidyltransferase</keyword>
<keyword id="KW-0804">Transcription</keyword>
<keyword id="KW-0808">Transferase</keyword>
<name>RPOB_FRATW</name>
<feature type="chain" id="PRO_0000300319" description="DNA-directed RNA polymerase subunit beta">
    <location>
        <begin position="1"/>
        <end position="1358"/>
    </location>
</feature>
<organism>
    <name type="scientific">Francisella tularensis subsp. tularensis (strain WY96-3418)</name>
    <dbReference type="NCBI Taxonomy" id="418136"/>
    <lineage>
        <taxon>Bacteria</taxon>
        <taxon>Pseudomonadati</taxon>
        <taxon>Pseudomonadota</taxon>
        <taxon>Gammaproteobacteria</taxon>
        <taxon>Thiotrichales</taxon>
        <taxon>Francisellaceae</taxon>
        <taxon>Francisella</taxon>
    </lineage>
</organism>
<reference key="1">
    <citation type="journal article" date="2007" name="PLoS ONE">
        <title>Complete genomic characterization of a pathogenic A.II strain of Francisella tularensis subspecies tularensis.</title>
        <authorList>
            <person name="Beckstrom-Sternberg S.M."/>
            <person name="Auerbach R.K."/>
            <person name="Godbole S."/>
            <person name="Pearson J.V."/>
            <person name="Beckstrom-Sternberg J.S."/>
            <person name="Deng Z."/>
            <person name="Munk C."/>
            <person name="Kubota K."/>
            <person name="Zhou Y."/>
            <person name="Bruce D."/>
            <person name="Noronha J."/>
            <person name="Scheuermann R.H."/>
            <person name="Wang A."/>
            <person name="Wei X."/>
            <person name="Wang J."/>
            <person name="Hao J."/>
            <person name="Wagner D.M."/>
            <person name="Brettin T.S."/>
            <person name="Brown N."/>
            <person name="Gilna P."/>
            <person name="Keim P.S."/>
        </authorList>
    </citation>
    <scope>NUCLEOTIDE SEQUENCE [LARGE SCALE GENOMIC DNA]</scope>
    <source>
        <strain>WY96-3418</strain>
    </source>
</reference>